<comment type="function">
    <text evidence="1">Chaperone involved in RuBisCO assembly process.</text>
</comment>
<comment type="subunit">
    <text evidence="1 2">Homodimer (PubMed:23295968). Interacts with rbcL, atpB and RBCS-1B (PubMed:21922322).</text>
</comment>
<comment type="subcellular location">
    <subcellularLocation>
        <location evidence="1">Plastid</location>
        <location evidence="1">Chloroplast stroma</location>
    </subcellularLocation>
</comment>
<comment type="induction">
    <text evidence="1">Not regulated by cold, salt or desiccation.</text>
</comment>
<comment type="similarity">
    <text evidence="4">Belongs to the RbcX family.</text>
</comment>
<reference key="1">
    <citation type="journal article" date="2000" name="Nature">
        <title>Sequence and analysis of chromosome 5 of the plant Arabidopsis thaliana.</title>
        <authorList>
            <person name="Tabata S."/>
            <person name="Kaneko T."/>
            <person name="Nakamura Y."/>
            <person name="Kotani H."/>
            <person name="Kato T."/>
            <person name="Asamizu E."/>
            <person name="Miyajima N."/>
            <person name="Sasamoto S."/>
            <person name="Kimura T."/>
            <person name="Hosouchi T."/>
            <person name="Kawashima K."/>
            <person name="Kohara M."/>
            <person name="Matsumoto M."/>
            <person name="Matsuno A."/>
            <person name="Muraki A."/>
            <person name="Nakayama S."/>
            <person name="Nakazaki N."/>
            <person name="Naruo K."/>
            <person name="Okumura S."/>
            <person name="Shinpo S."/>
            <person name="Takeuchi C."/>
            <person name="Wada T."/>
            <person name="Watanabe A."/>
            <person name="Yamada M."/>
            <person name="Yasuda M."/>
            <person name="Sato S."/>
            <person name="de la Bastide M."/>
            <person name="Huang E."/>
            <person name="Spiegel L."/>
            <person name="Gnoj L."/>
            <person name="O'Shaughnessy A."/>
            <person name="Preston R."/>
            <person name="Habermann K."/>
            <person name="Murray J."/>
            <person name="Johnson D."/>
            <person name="Rohlfing T."/>
            <person name="Nelson J."/>
            <person name="Stoneking T."/>
            <person name="Pepin K."/>
            <person name="Spieth J."/>
            <person name="Sekhon M."/>
            <person name="Armstrong J."/>
            <person name="Becker M."/>
            <person name="Belter E."/>
            <person name="Cordum H."/>
            <person name="Cordes M."/>
            <person name="Courtney L."/>
            <person name="Courtney W."/>
            <person name="Dante M."/>
            <person name="Du H."/>
            <person name="Edwards J."/>
            <person name="Fryman J."/>
            <person name="Haakensen B."/>
            <person name="Lamar E."/>
            <person name="Latreille P."/>
            <person name="Leonard S."/>
            <person name="Meyer R."/>
            <person name="Mulvaney E."/>
            <person name="Ozersky P."/>
            <person name="Riley A."/>
            <person name="Strowmatt C."/>
            <person name="Wagner-McPherson C."/>
            <person name="Wollam A."/>
            <person name="Yoakum M."/>
            <person name="Bell M."/>
            <person name="Dedhia N."/>
            <person name="Parnell L."/>
            <person name="Shah R."/>
            <person name="Rodriguez M."/>
            <person name="Hoon See L."/>
            <person name="Vil D."/>
            <person name="Baker J."/>
            <person name="Kirchoff K."/>
            <person name="Toth K."/>
            <person name="King L."/>
            <person name="Bahret A."/>
            <person name="Miller B."/>
            <person name="Marra M.A."/>
            <person name="Martienssen R."/>
            <person name="McCombie W.R."/>
            <person name="Wilson R.K."/>
            <person name="Murphy G."/>
            <person name="Bancroft I."/>
            <person name="Volckaert G."/>
            <person name="Wambutt R."/>
            <person name="Duesterhoeft A."/>
            <person name="Stiekema W."/>
            <person name="Pohl T."/>
            <person name="Entian K.-D."/>
            <person name="Terryn N."/>
            <person name="Hartley N."/>
            <person name="Bent E."/>
            <person name="Johnson S."/>
            <person name="Langham S.-A."/>
            <person name="McCullagh B."/>
            <person name="Robben J."/>
            <person name="Grymonprez B."/>
            <person name="Zimmermann W."/>
            <person name="Ramsperger U."/>
            <person name="Wedler H."/>
            <person name="Balke K."/>
            <person name="Wedler E."/>
            <person name="Peters S."/>
            <person name="van Staveren M."/>
            <person name="Dirkse W."/>
            <person name="Mooijman P."/>
            <person name="Klein Lankhorst R."/>
            <person name="Weitzenegger T."/>
            <person name="Bothe G."/>
            <person name="Rose M."/>
            <person name="Hauf J."/>
            <person name="Berneiser S."/>
            <person name="Hempel S."/>
            <person name="Feldpausch M."/>
            <person name="Lamberth S."/>
            <person name="Villarroel R."/>
            <person name="Gielen J."/>
            <person name="Ardiles W."/>
            <person name="Bents O."/>
            <person name="Lemcke K."/>
            <person name="Kolesov G."/>
            <person name="Mayer K.F.X."/>
            <person name="Rudd S."/>
            <person name="Schoof H."/>
            <person name="Schueller C."/>
            <person name="Zaccaria P."/>
            <person name="Mewes H.-W."/>
            <person name="Bevan M."/>
            <person name="Fransz P.F."/>
        </authorList>
    </citation>
    <scope>NUCLEOTIDE SEQUENCE [LARGE SCALE GENOMIC DNA]</scope>
    <source>
        <strain>cv. Columbia</strain>
    </source>
</reference>
<reference key="2">
    <citation type="journal article" date="2017" name="Plant J.">
        <title>Araport11: a complete reannotation of the Arabidopsis thaliana reference genome.</title>
        <authorList>
            <person name="Cheng C.Y."/>
            <person name="Krishnakumar V."/>
            <person name="Chan A.P."/>
            <person name="Thibaud-Nissen F."/>
            <person name="Schobel S."/>
            <person name="Town C.D."/>
        </authorList>
    </citation>
    <scope>GENOME REANNOTATION</scope>
    <source>
        <strain>cv. Columbia</strain>
    </source>
</reference>
<reference key="3">
    <citation type="journal article" date="2003" name="Science">
        <title>Empirical analysis of transcriptional activity in the Arabidopsis genome.</title>
        <authorList>
            <person name="Yamada K."/>
            <person name="Lim J."/>
            <person name="Dale J.M."/>
            <person name="Chen H."/>
            <person name="Shinn P."/>
            <person name="Palm C.J."/>
            <person name="Southwick A.M."/>
            <person name="Wu H.C."/>
            <person name="Kim C.J."/>
            <person name="Nguyen M."/>
            <person name="Pham P.K."/>
            <person name="Cheuk R.F."/>
            <person name="Karlin-Newmann G."/>
            <person name="Liu S.X."/>
            <person name="Lam B."/>
            <person name="Sakano H."/>
            <person name="Wu T."/>
            <person name="Yu G."/>
            <person name="Miranda M."/>
            <person name="Quach H.L."/>
            <person name="Tripp M."/>
            <person name="Chang C.H."/>
            <person name="Lee J.M."/>
            <person name="Toriumi M.J."/>
            <person name="Chan M.M."/>
            <person name="Tang C.C."/>
            <person name="Onodera C.S."/>
            <person name="Deng J.M."/>
            <person name="Akiyama K."/>
            <person name="Ansari Y."/>
            <person name="Arakawa T."/>
            <person name="Banh J."/>
            <person name="Banno F."/>
            <person name="Bowser L."/>
            <person name="Brooks S.Y."/>
            <person name="Carninci P."/>
            <person name="Chao Q."/>
            <person name="Choy N."/>
            <person name="Enju A."/>
            <person name="Goldsmith A.D."/>
            <person name="Gurjal M."/>
            <person name="Hansen N.F."/>
            <person name="Hayashizaki Y."/>
            <person name="Johnson-Hopson C."/>
            <person name="Hsuan V.W."/>
            <person name="Iida K."/>
            <person name="Karnes M."/>
            <person name="Khan S."/>
            <person name="Koesema E."/>
            <person name="Ishida J."/>
            <person name="Jiang P.X."/>
            <person name="Jones T."/>
            <person name="Kawai J."/>
            <person name="Kamiya A."/>
            <person name="Meyers C."/>
            <person name="Nakajima M."/>
            <person name="Narusaka M."/>
            <person name="Seki M."/>
            <person name="Sakurai T."/>
            <person name="Satou M."/>
            <person name="Tamse R."/>
            <person name="Vaysberg M."/>
            <person name="Wallender E.K."/>
            <person name="Wong C."/>
            <person name="Yamamura Y."/>
            <person name="Yuan S."/>
            <person name="Shinozaki K."/>
            <person name="Davis R.W."/>
            <person name="Theologis A."/>
            <person name="Ecker J.R."/>
        </authorList>
    </citation>
    <scope>NUCLEOTIDE SEQUENCE [LARGE SCALE MRNA]</scope>
    <source>
        <strain>cv. Columbia</strain>
    </source>
</reference>
<reference key="4">
    <citation type="submission" date="2002-03" db="EMBL/GenBank/DDBJ databases">
        <title>Full-length cDNA from Arabidopsis thaliana.</title>
        <authorList>
            <person name="Brover V.V."/>
            <person name="Troukhan M.E."/>
            <person name="Alexandrov N.A."/>
            <person name="Lu Y.-P."/>
            <person name="Flavell R.B."/>
            <person name="Feldmann K.A."/>
        </authorList>
    </citation>
    <scope>NUCLEOTIDE SEQUENCE [LARGE SCALE MRNA]</scope>
</reference>
<reference key="5">
    <citation type="journal article" date="2011" name="Plant Mol. Biol.">
        <title>Initial characteristics of RbcX proteins from Arabidopsis thaliana.</title>
        <authorList>
            <person name="Kolesinski P."/>
            <person name="Piechota J."/>
            <person name="Szczepaniak A."/>
        </authorList>
    </citation>
    <scope>FUNCTION</scope>
    <scope>SUBCELLULAR LOCATION</scope>
    <scope>PROTEIN SEQUENCE OF 79-83</scope>
    <scope>INTERACTION WITH RBCL; THI1 AND RBCS-1B</scope>
    <scope>LACK OF INDUCTION BY STRESS</scope>
</reference>
<reference key="6">
    <citation type="journal article" date="2013" name="Biochim. Biophys. Acta">
        <title>Insights into eukaryotic Rubisco assembly - crystal structures of RbcX chaperones from Arabidopsis thaliana.</title>
        <authorList>
            <person name="Kolesinski P."/>
            <person name="Golik P."/>
            <person name="Grudnik P."/>
            <person name="Piechota J."/>
            <person name="Markiewicz M."/>
            <person name="Tarnawski M."/>
            <person name="Dubin G."/>
            <person name="Szczepaniak A."/>
        </authorList>
    </citation>
    <scope>X-RAY CRYSTALLOGRAPHY (2.00 ANGSTROMS) OF 79-203</scope>
    <scope>SUBUNIT</scope>
    <scope>MUTAGENESIS OF CYS-168</scope>
</reference>
<organism evidence="6">
    <name type="scientific">Arabidopsis thaliana</name>
    <name type="common">Mouse-ear cress</name>
    <dbReference type="NCBI Taxonomy" id="3702"/>
    <lineage>
        <taxon>Eukaryota</taxon>
        <taxon>Viridiplantae</taxon>
        <taxon>Streptophyta</taxon>
        <taxon>Embryophyta</taxon>
        <taxon>Tracheophyta</taxon>
        <taxon>Spermatophyta</taxon>
        <taxon>Magnoliopsida</taxon>
        <taxon>eudicotyledons</taxon>
        <taxon>Gunneridae</taxon>
        <taxon>Pentapetalae</taxon>
        <taxon>rosids</taxon>
        <taxon>malvids</taxon>
        <taxon>Brassicales</taxon>
        <taxon>Brassicaceae</taxon>
        <taxon>Camelineae</taxon>
        <taxon>Arabidopsis</taxon>
    </lineage>
</organism>
<evidence type="ECO:0000269" key="1">
    <source>
    </source>
</evidence>
<evidence type="ECO:0000269" key="2">
    <source>
    </source>
</evidence>
<evidence type="ECO:0000303" key="3">
    <source>
    </source>
</evidence>
<evidence type="ECO:0000305" key="4"/>
<evidence type="ECO:0000312" key="5">
    <source>
        <dbReference type="Araport" id="AT5G19855"/>
    </source>
</evidence>
<evidence type="ECO:0000312" key="6">
    <source>
        <dbReference type="EMBL" id="AAM65713.1"/>
    </source>
</evidence>
<evidence type="ECO:0000312" key="7">
    <source>
        <dbReference type="EMBL" id="AF296836"/>
    </source>
</evidence>
<evidence type="ECO:0000312" key="8">
    <source>
        <dbReference type="EMBL" id="AF296838"/>
    </source>
</evidence>
<evidence type="ECO:0007829" key="9">
    <source>
        <dbReference type="PDB" id="4GR6"/>
    </source>
</evidence>
<sequence>MVSAWFVVGSPVMDSSSSPCLCLDAHTTGTIRRKKILGKARNLELGSSFTGSRIVFRLSPKRVSRIANRKSKKLLIVNEDVAGNYDDTFGDVQKQIVNYFTYKAVRTVLHQLYEMNPPQYTWFYNHIITNRPTDGKRFLRALGKESQELAERVMITRLHLYGKWIKKCDHGKIYQEISDENLALMRERLMETVIWPSDDTNSR</sequence>
<accession>Q8L9X2</accession>
<dbReference type="EMBL" id="AF296836">
    <property type="status" value="NOT_ANNOTATED_CDS"/>
    <property type="molecule type" value="Genomic_DNA"/>
</dbReference>
<dbReference type="EMBL" id="AF296838">
    <property type="status" value="NOT_ANNOTATED_CDS"/>
    <property type="molecule type" value="Genomic_DNA"/>
</dbReference>
<dbReference type="EMBL" id="CP002688">
    <property type="protein sequence ID" value="AED92757.1"/>
    <property type="molecule type" value="Genomic_DNA"/>
</dbReference>
<dbReference type="EMBL" id="BT004014">
    <property type="protein sequence ID" value="AAO42050.1"/>
    <property type="molecule type" value="mRNA"/>
</dbReference>
<dbReference type="EMBL" id="BT005149">
    <property type="protein sequence ID" value="AAO50682.1"/>
    <property type="molecule type" value="mRNA"/>
</dbReference>
<dbReference type="EMBL" id="AY088169">
    <property type="protein sequence ID" value="AAM65713.1"/>
    <property type="molecule type" value="mRNA"/>
</dbReference>
<dbReference type="RefSeq" id="NP_568382.1">
    <property type="nucleotide sequence ID" value="NM_121991.4"/>
</dbReference>
<dbReference type="PDB" id="4GR6">
    <property type="method" value="X-ray"/>
    <property type="resolution" value="2.00 A"/>
    <property type="chains" value="A/B=79-203"/>
</dbReference>
<dbReference type="PDBsum" id="4GR6"/>
<dbReference type="SMR" id="Q8L9X2"/>
<dbReference type="FunCoup" id="Q8L9X2">
    <property type="interactions" value="1305"/>
</dbReference>
<dbReference type="STRING" id="3702.Q8L9X2"/>
<dbReference type="PaxDb" id="3702-AT5G19855.1"/>
<dbReference type="ProteomicsDB" id="225958"/>
<dbReference type="EnsemblPlants" id="AT5G19855.1">
    <property type="protein sequence ID" value="AT5G19855.1"/>
    <property type="gene ID" value="AT5G19855"/>
</dbReference>
<dbReference type="GeneID" id="832106"/>
<dbReference type="Gramene" id="AT5G19855.1">
    <property type="protein sequence ID" value="AT5G19855.1"/>
    <property type="gene ID" value="AT5G19855"/>
</dbReference>
<dbReference type="KEGG" id="ath:AT5G19855"/>
<dbReference type="Araport" id="AT5G19855"/>
<dbReference type="TAIR" id="AT5G19855">
    <property type="gene designation" value="RBCX2"/>
</dbReference>
<dbReference type="eggNOG" id="ENOG502QRY0">
    <property type="taxonomic scope" value="Eukaryota"/>
</dbReference>
<dbReference type="HOGENOM" id="CLU_092281_1_0_1"/>
<dbReference type="InParanoid" id="Q8L9X2"/>
<dbReference type="OMA" id="YEDTFHD"/>
<dbReference type="PhylomeDB" id="Q8L9X2"/>
<dbReference type="EvolutionaryTrace" id="Q8L9X2"/>
<dbReference type="PRO" id="PR:Q8L9X2"/>
<dbReference type="Proteomes" id="UP000006548">
    <property type="component" value="Chromosome 5"/>
</dbReference>
<dbReference type="ExpressionAtlas" id="Q8L9X2">
    <property type="expression patterns" value="baseline and differential"/>
</dbReference>
<dbReference type="GO" id="GO:0009570">
    <property type="term" value="C:chloroplast stroma"/>
    <property type="evidence" value="ECO:0000314"/>
    <property type="project" value="TAIR"/>
</dbReference>
<dbReference type="GO" id="GO:0044183">
    <property type="term" value="F:protein folding chaperone"/>
    <property type="evidence" value="ECO:0000314"/>
    <property type="project" value="TAIR"/>
</dbReference>
<dbReference type="GO" id="GO:0015977">
    <property type="term" value="P:carbon fixation"/>
    <property type="evidence" value="ECO:0007669"/>
    <property type="project" value="UniProtKB-KW"/>
</dbReference>
<dbReference type="GO" id="GO:0061077">
    <property type="term" value="P:chaperone-mediated protein folding"/>
    <property type="evidence" value="ECO:0000314"/>
    <property type="project" value="TAIR"/>
</dbReference>
<dbReference type="GO" id="GO:0015979">
    <property type="term" value="P:photosynthesis"/>
    <property type="evidence" value="ECO:0007669"/>
    <property type="project" value="UniProtKB-KW"/>
</dbReference>
<dbReference type="GO" id="GO:0110102">
    <property type="term" value="P:ribulose bisphosphate carboxylase complex assembly"/>
    <property type="evidence" value="ECO:0007669"/>
    <property type="project" value="InterPro"/>
</dbReference>
<dbReference type="Gene3D" id="1.10.1200.210">
    <property type="entry name" value="Chaperonin-like RbcX"/>
    <property type="match status" value="1"/>
</dbReference>
<dbReference type="InterPro" id="IPR038052">
    <property type="entry name" value="Chaperonin_RbcX_sf"/>
</dbReference>
<dbReference type="InterPro" id="IPR003435">
    <property type="entry name" value="Chaperonin_RcbX"/>
</dbReference>
<dbReference type="PANTHER" id="PTHR33791">
    <property type="entry name" value="CHAPERONIN-LIKE RBCX PROTEIN 1, CHLOROPLASTIC"/>
    <property type="match status" value="1"/>
</dbReference>
<dbReference type="PANTHER" id="PTHR33791:SF16">
    <property type="entry name" value="CHAPERONIN-LIKE RBCX PROTEIN 2, CHLOROPLASTIC"/>
    <property type="match status" value="1"/>
</dbReference>
<dbReference type="Pfam" id="PF02341">
    <property type="entry name" value="RbcX"/>
    <property type="match status" value="1"/>
</dbReference>
<dbReference type="SUPFAM" id="SSF158615">
    <property type="entry name" value="RbcX-like"/>
    <property type="match status" value="1"/>
</dbReference>
<protein>
    <recommendedName>
        <fullName evidence="3">Chaperonin-like RbcX protein 2, chloroplastic</fullName>
        <shortName evidence="3">AtRBCX2</shortName>
    </recommendedName>
</protein>
<proteinExistence type="evidence at protein level"/>
<name>RBCX2_ARATH</name>
<gene>
    <name evidence="3" type="primary">RBCX2</name>
    <name evidence="5" type="ordered locus">At5g19855</name>
    <name evidence="7" type="ORF">F28I16</name>
    <name evidence="8" type="ORF">T29J13</name>
</gene>
<keyword id="KW-0002">3D-structure</keyword>
<keyword id="KW-0120">Carbon dioxide fixation</keyword>
<keyword id="KW-0143">Chaperone</keyword>
<keyword id="KW-0150">Chloroplast</keyword>
<keyword id="KW-0903">Direct protein sequencing</keyword>
<keyword id="KW-0602">Photosynthesis</keyword>
<keyword id="KW-0934">Plastid</keyword>
<keyword id="KW-1185">Reference proteome</keyword>
<keyword id="KW-0809">Transit peptide</keyword>
<feature type="transit peptide" description="Chloroplast" evidence="1">
    <location>
        <begin position="1"/>
        <end position="78"/>
    </location>
</feature>
<feature type="chain" id="PRO_0000437959" description="Chaperonin-like RbcX protein 2, chloroplastic">
    <location>
        <begin position="79"/>
        <end position="203"/>
    </location>
</feature>
<feature type="mutagenesis site" description="No effect on rbcL binding." evidence="2">
    <original>C</original>
    <variation>A</variation>
    <location>
        <position position="168"/>
    </location>
</feature>
<feature type="helix" evidence="9">
    <location>
        <begin position="90"/>
        <end position="115"/>
    </location>
</feature>
<feature type="helix" evidence="9">
    <location>
        <begin position="117"/>
        <end position="129"/>
    </location>
</feature>
<feature type="strand" evidence="9">
    <location>
        <begin position="132"/>
        <end position="134"/>
    </location>
</feature>
<feature type="helix" evidence="9">
    <location>
        <begin position="135"/>
        <end position="145"/>
    </location>
</feature>
<feature type="helix" evidence="9">
    <location>
        <begin position="147"/>
        <end position="167"/>
    </location>
</feature>
<feature type="helix" evidence="9">
    <location>
        <begin position="170"/>
        <end position="189"/>
    </location>
</feature>